<evidence type="ECO:0000256" key="1">
    <source>
        <dbReference type="SAM" id="MobiDB-lite"/>
    </source>
</evidence>
<keyword id="KW-1185">Reference proteome</keyword>
<proteinExistence type="predicted"/>
<protein>
    <recommendedName>
        <fullName>Putative uncharacterized protein DDB_G0288303</fullName>
    </recommendedName>
</protein>
<accession>Q54J44</accession>
<dbReference type="EMBL" id="AAFI02000109">
    <property type="protein sequence ID" value="EAL63294.1"/>
    <property type="molecule type" value="Genomic_DNA"/>
</dbReference>
<dbReference type="RefSeq" id="XP_636803.1">
    <property type="nucleotide sequence ID" value="XM_631711.1"/>
</dbReference>
<dbReference type="FunCoup" id="Q54J44">
    <property type="interactions" value="435"/>
</dbReference>
<dbReference type="PaxDb" id="44689-DDB0187883"/>
<dbReference type="EnsemblProtists" id="EAL63294">
    <property type="protein sequence ID" value="EAL63294"/>
    <property type="gene ID" value="DDB_G0288303"/>
</dbReference>
<dbReference type="GeneID" id="8626560"/>
<dbReference type="KEGG" id="ddi:DDB_G0288303"/>
<dbReference type="dictyBase" id="DDB_G0288303"/>
<dbReference type="VEuPathDB" id="AmoebaDB:DDB_G0288303"/>
<dbReference type="eggNOG" id="ENOG502RI1D">
    <property type="taxonomic scope" value="Eukaryota"/>
</dbReference>
<dbReference type="HOGENOM" id="CLU_1323022_0_0_1"/>
<dbReference type="InParanoid" id="Q54J44"/>
<dbReference type="OMA" id="KNDEWFH"/>
<dbReference type="PRO" id="PR:Q54J44"/>
<dbReference type="Proteomes" id="UP000002195">
    <property type="component" value="Chromosome 5"/>
</dbReference>
<dbReference type="InterPro" id="IPR031493">
    <property type="entry name" value="Zinc_ribbon_15"/>
</dbReference>
<dbReference type="PANTHER" id="PTHR28139">
    <property type="entry name" value="UPF0768 PROTEIN YBL029C-A"/>
    <property type="match status" value="1"/>
</dbReference>
<dbReference type="PANTHER" id="PTHR28139:SF1">
    <property type="entry name" value="UPF0768 PROTEIN YBL029C-A"/>
    <property type="match status" value="1"/>
</dbReference>
<dbReference type="Pfam" id="PF17032">
    <property type="entry name" value="Zn_ribbon_15"/>
    <property type="match status" value="1"/>
</dbReference>
<gene>
    <name type="ORF">DDB_G0288303</name>
</gene>
<feature type="chain" id="PRO_0000367267" description="Putative uncharacterized protein DDB_G0288303">
    <location>
        <begin position="1"/>
        <end position="208"/>
    </location>
</feature>
<feature type="region of interest" description="Disordered" evidence="1">
    <location>
        <begin position="118"/>
        <end position="208"/>
    </location>
</feature>
<feature type="compositionally biased region" description="Low complexity" evidence="1">
    <location>
        <begin position="118"/>
        <end position="134"/>
    </location>
</feature>
<feature type="compositionally biased region" description="Polar residues" evidence="1">
    <location>
        <begin position="138"/>
        <end position="175"/>
    </location>
</feature>
<feature type="compositionally biased region" description="Basic residues" evidence="1">
    <location>
        <begin position="187"/>
        <end position="201"/>
    </location>
</feature>
<name>Y7883_DICDI</name>
<organism>
    <name type="scientific">Dictyostelium discoideum</name>
    <name type="common">Social amoeba</name>
    <dbReference type="NCBI Taxonomy" id="44689"/>
    <lineage>
        <taxon>Eukaryota</taxon>
        <taxon>Amoebozoa</taxon>
        <taxon>Evosea</taxon>
        <taxon>Eumycetozoa</taxon>
        <taxon>Dictyostelia</taxon>
        <taxon>Dictyosteliales</taxon>
        <taxon>Dictyosteliaceae</taxon>
        <taxon>Dictyostelium</taxon>
    </lineage>
</organism>
<reference key="1">
    <citation type="journal article" date="2005" name="Nature">
        <title>The genome of the social amoeba Dictyostelium discoideum.</title>
        <authorList>
            <person name="Eichinger L."/>
            <person name="Pachebat J.A."/>
            <person name="Gloeckner G."/>
            <person name="Rajandream M.A."/>
            <person name="Sucgang R."/>
            <person name="Berriman M."/>
            <person name="Song J."/>
            <person name="Olsen R."/>
            <person name="Szafranski K."/>
            <person name="Xu Q."/>
            <person name="Tunggal B."/>
            <person name="Kummerfeld S."/>
            <person name="Madera M."/>
            <person name="Konfortov B.A."/>
            <person name="Rivero F."/>
            <person name="Bankier A.T."/>
            <person name="Lehmann R."/>
            <person name="Hamlin N."/>
            <person name="Davies R."/>
            <person name="Gaudet P."/>
            <person name="Fey P."/>
            <person name="Pilcher K."/>
            <person name="Chen G."/>
            <person name="Saunders D."/>
            <person name="Sodergren E.J."/>
            <person name="Davis P."/>
            <person name="Kerhornou A."/>
            <person name="Nie X."/>
            <person name="Hall N."/>
            <person name="Anjard C."/>
            <person name="Hemphill L."/>
            <person name="Bason N."/>
            <person name="Farbrother P."/>
            <person name="Desany B."/>
            <person name="Just E."/>
            <person name="Morio T."/>
            <person name="Rost R."/>
            <person name="Churcher C.M."/>
            <person name="Cooper J."/>
            <person name="Haydock S."/>
            <person name="van Driessche N."/>
            <person name="Cronin A."/>
            <person name="Goodhead I."/>
            <person name="Muzny D.M."/>
            <person name="Mourier T."/>
            <person name="Pain A."/>
            <person name="Lu M."/>
            <person name="Harper D."/>
            <person name="Lindsay R."/>
            <person name="Hauser H."/>
            <person name="James K.D."/>
            <person name="Quiles M."/>
            <person name="Madan Babu M."/>
            <person name="Saito T."/>
            <person name="Buchrieser C."/>
            <person name="Wardroper A."/>
            <person name="Felder M."/>
            <person name="Thangavelu M."/>
            <person name="Johnson D."/>
            <person name="Knights A."/>
            <person name="Loulseged H."/>
            <person name="Mungall K.L."/>
            <person name="Oliver K."/>
            <person name="Price C."/>
            <person name="Quail M.A."/>
            <person name="Urushihara H."/>
            <person name="Hernandez J."/>
            <person name="Rabbinowitsch E."/>
            <person name="Steffen D."/>
            <person name="Sanders M."/>
            <person name="Ma J."/>
            <person name="Kohara Y."/>
            <person name="Sharp S."/>
            <person name="Simmonds M.N."/>
            <person name="Spiegler S."/>
            <person name="Tivey A."/>
            <person name="Sugano S."/>
            <person name="White B."/>
            <person name="Walker D."/>
            <person name="Woodward J.R."/>
            <person name="Winckler T."/>
            <person name="Tanaka Y."/>
            <person name="Shaulsky G."/>
            <person name="Schleicher M."/>
            <person name="Weinstock G.M."/>
            <person name="Rosenthal A."/>
            <person name="Cox E.C."/>
            <person name="Chisholm R.L."/>
            <person name="Gibbs R.A."/>
            <person name="Loomis W.F."/>
            <person name="Platzer M."/>
            <person name="Kay R.R."/>
            <person name="Williams J.G."/>
            <person name="Dear P.H."/>
            <person name="Noegel A.A."/>
            <person name="Barrell B.G."/>
            <person name="Kuspa A."/>
        </authorList>
    </citation>
    <scope>NUCLEOTIDE SEQUENCE [LARGE SCALE GENOMIC DNA]</scope>
    <source>
        <strain>AX4</strain>
    </source>
</reference>
<sequence length="208" mass="24704">MWIPIIIPFGLRGKSKLIDNKKRICVNCKNSGVQLVKNDEWFHLFFIPFFKVKNGNMFLHCPSCGATIPYYEKETMPTFNNPDDVKFEAENNEKNHKKGKYDAPMAQVPPEYLQRQDQYPNQYQQQPQQQQPGYMDYNYNQPPVQLNKQAYDNYQQNDYKSNNQPNLAKENNISNENEELGDNKKEKKEKKHSFFSKLHKKEKNEIKE</sequence>